<proteinExistence type="inferred from homology"/>
<organism>
    <name type="scientific">Homo sapiens</name>
    <name type="common">Human</name>
    <dbReference type="NCBI Taxonomy" id="9606"/>
    <lineage>
        <taxon>Eukaryota</taxon>
        <taxon>Metazoa</taxon>
        <taxon>Chordata</taxon>
        <taxon>Craniata</taxon>
        <taxon>Vertebrata</taxon>
        <taxon>Euteleostomi</taxon>
        <taxon>Mammalia</taxon>
        <taxon>Eutheria</taxon>
        <taxon>Euarchontoglires</taxon>
        <taxon>Primates</taxon>
        <taxon>Haplorrhini</taxon>
        <taxon>Catarrhini</taxon>
        <taxon>Hominidae</taxon>
        <taxon>Homo</taxon>
    </lineage>
</organism>
<dbReference type="EMBL" id="AP000790">
    <property type="status" value="NOT_ANNOTATED_CDS"/>
    <property type="molecule type" value="Genomic_DNA"/>
</dbReference>
<dbReference type="CCDS" id="CCDS91479.1"/>
<dbReference type="RefSeq" id="NP_001382206.1">
    <property type="nucleotide sequence ID" value="NM_001395277.1"/>
</dbReference>
<dbReference type="SMR" id="A0A2R8YFL7"/>
<dbReference type="GlyCosmos" id="A0A2R8YFL7">
    <property type="glycosylation" value="1 site, No reported glycans"/>
</dbReference>
<dbReference type="GlyGen" id="A0A2R8YFL7">
    <property type="glycosylation" value="1 site"/>
</dbReference>
<dbReference type="MassIVE" id="A0A2R8YFL7"/>
<dbReference type="PeptideAtlas" id="A0A2R8YFL7"/>
<dbReference type="Ensembl" id="ENST00000643613.1">
    <property type="protein sequence ID" value="ENSP00000495234.1"/>
    <property type="gene ID" value="ENSG00000285375.1"/>
</dbReference>
<dbReference type="Ensembl" id="ENST00000645590.2">
    <property type="protein sequence ID" value="ENSP00000494103.1"/>
    <property type="gene ID" value="ENSG00000285010.2"/>
</dbReference>
<dbReference type="GeneID" id="112577462"/>
<dbReference type="MANE-Select" id="ENST00000645590.2">
    <property type="protein sequence ID" value="ENSP00000494103.1"/>
    <property type="RefSeq nucleotide sequence ID" value="NM_001395277.1"/>
    <property type="RefSeq protein sequence ID" value="NP_001382206.1"/>
</dbReference>
<dbReference type="AGR" id="HGNC:53904"/>
<dbReference type="GeneCards" id="OOSP4A"/>
<dbReference type="HGNC" id="HGNC:53904">
    <property type="gene designation" value="OOSP4A"/>
</dbReference>
<dbReference type="HPA" id="ENSG00000285010">
    <property type="expression patterns" value="Not detected"/>
</dbReference>
<dbReference type="neXtProt" id="NX_A0A2R8YFL7"/>
<dbReference type="VEuPathDB" id="HostDB:ENSG00000285010"/>
<dbReference type="GeneTree" id="ENSGT00960000193304"/>
<dbReference type="InParanoid" id="A0A2R8YFL7"/>
<dbReference type="OMA" id="QDLSITC"/>
<dbReference type="OrthoDB" id="9535490at2759"/>
<dbReference type="PAN-GO" id="A0A2R8YFL7">
    <property type="GO annotations" value="0 GO annotations based on evolutionary models"/>
</dbReference>
<dbReference type="Pharos" id="A0A2R8YFL7">
    <property type="development level" value="Tdark"/>
</dbReference>
<dbReference type="PRO" id="PR:A0A2R8YFL7"/>
<dbReference type="Proteomes" id="UP000005640">
    <property type="component" value="Chromosome 11"/>
</dbReference>
<dbReference type="Bgee" id="ENSG00000285010">
    <property type="expression patterns" value="Expressed in blood and 47 other cell types or tissues"/>
</dbReference>
<dbReference type="GO" id="GO:0005576">
    <property type="term" value="C:extracellular region"/>
    <property type="evidence" value="ECO:0007669"/>
    <property type="project" value="UniProtKB-SubCell"/>
</dbReference>
<dbReference type="Gene3D" id="2.60.40.3210">
    <property type="entry name" value="Zona pellucida, ZP-N domain"/>
    <property type="match status" value="1"/>
</dbReference>
<dbReference type="InterPro" id="IPR033222">
    <property type="entry name" value="PLAC1_fam"/>
</dbReference>
<dbReference type="PANTHER" id="PTHR14380:SF11">
    <property type="entry name" value="OOCYTE-SECRETED PROTEIN 4A"/>
    <property type="match status" value="1"/>
</dbReference>
<dbReference type="PANTHER" id="PTHR14380">
    <property type="entry name" value="PLACENTA-SPECIFIC PROTEIN 1"/>
    <property type="match status" value="1"/>
</dbReference>
<reference key="1">
    <citation type="journal article" date="2006" name="Nature">
        <title>Human chromosome 11 DNA sequence and analysis including novel gene identification.</title>
        <authorList>
            <person name="Taylor T.D."/>
            <person name="Noguchi H."/>
            <person name="Totoki Y."/>
            <person name="Toyoda A."/>
            <person name="Kuroki Y."/>
            <person name="Dewar K."/>
            <person name="Lloyd C."/>
            <person name="Itoh T."/>
            <person name="Takeda T."/>
            <person name="Kim D.-W."/>
            <person name="She X."/>
            <person name="Barlow K.F."/>
            <person name="Bloom T."/>
            <person name="Bruford E."/>
            <person name="Chang J.L."/>
            <person name="Cuomo C.A."/>
            <person name="Eichler E."/>
            <person name="FitzGerald M.G."/>
            <person name="Jaffe D.B."/>
            <person name="LaButti K."/>
            <person name="Nicol R."/>
            <person name="Park H.-S."/>
            <person name="Seaman C."/>
            <person name="Sougnez C."/>
            <person name="Yang X."/>
            <person name="Zimmer A.R."/>
            <person name="Zody M.C."/>
            <person name="Birren B.W."/>
            <person name="Nusbaum C."/>
            <person name="Fujiyama A."/>
            <person name="Hattori M."/>
            <person name="Rogers J."/>
            <person name="Lander E.S."/>
            <person name="Sakaki Y."/>
        </authorList>
    </citation>
    <scope>NUCLEOTIDE SEQUENCE [LARGE SCALE GENOMIC DNA]</scope>
</reference>
<comment type="subcellular location">
    <subcellularLocation>
        <location evidence="3">Secreted</location>
    </subcellularLocation>
</comment>
<comment type="similarity">
    <text evidence="3">Belongs to the PLAC1 family.</text>
</comment>
<accession>A0A2R8YFL7</accession>
<keyword id="KW-0325">Glycoprotein</keyword>
<keyword id="KW-1185">Reference proteome</keyword>
<keyword id="KW-0964">Secreted</keyword>
<keyword id="KW-0732">Signal</keyword>
<evidence type="ECO:0000255" key="1"/>
<evidence type="ECO:0000255" key="2">
    <source>
        <dbReference type="PROSITE-ProRule" id="PRU00498"/>
    </source>
</evidence>
<evidence type="ECO:0000305" key="3"/>
<evidence type="ECO:0000312" key="4">
    <source>
        <dbReference type="HGNC" id="HGNC:53904"/>
    </source>
</evidence>
<name>OSP4A_HUMAN</name>
<gene>
    <name evidence="4" type="primary">OOSP4A</name>
</gene>
<sequence length="184" mass="21040">MKISCVLGKLLMLFELIHGLQDLSITCSESWLQVKLRRTPLLNDLQPLQNELSLGIGCPVNMVEVDFFGFLYLLTFCGIRVSEHGVGILIESLIVYEPTNFDFNLHIPVSCYVQRRFPIILVMRGRENDSRRECRRSVGQHRSLSHELEDLEIRPRVSYVNSVPLLSYLIVSLPKCKNKAVHSG</sequence>
<feature type="signal peptide" evidence="1">
    <location>
        <begin position="1"/>
        <end position="19"/>
    </location>
</feature>
<feature type="chain" id="PRO_5015284893" description="Oocyte-secreted protein 4A" evidence="1">
    <location>
        <begin position="20"/>
        <end position="184"/>
    </location>
</feature>
<feature type="glycosylation site" description="N-linked (GlcNAc...) asparagine" evidence="2">
    <location>
        <position position="128"/>
    </location>
</feature>
<protein>
    <recommendedName>
        <fullName evidence="3">Oocyte-secreted protein 4A</fullName>
    </recommendedName>
</protein>